<gene>
    <name evidence="1" type="primary">hisA</name>
    <name type="ordered locus">ZMO1501</name>
</gene>
<sequence length="250" mass="26147">MTDSLIIFPAIDLKEGHVVRLSEGDMDRATIYDDDPAARARQFYEAGARYLHVVDLDGAFAGHAMNAAAVDAIVKAFPGTIELGGGIRDMNAIDGWLSRGISRVVIGTAAFENPDLVKEAAQKYPGQIVVAVDARDGMVTTKGWAEQSEISVTDMAERFADAGVVALLYTDVGRDGLKKGCNSEATLALAAATDIPVIASGGVKDIGDIELLARHTKDGIEGVICGRAIYDGSLDLKAALAIARQGGASA</sequence>
<reference key="1">
    <citation type="journal article" date="2005" name="Nat. Biotechnol.">
        <title>The genome sequence of the ethanologenic bacterium Zymomonas mobilis ZM4.</title>
        <authorList>
            <person name="Seo J.-S."/>
            <person name="Chong H."/>
            <person name="Park H.S."/>
            <person name="Yoon K.-O."/>
            <person name="Jung C."/>
            <person name="Kim J.J."/>
            <person name="Hong J.H."/>
            <person name="Kim H."/>
            <person name="Kim J.-H."/>
            <person name="Kil J.-I."/>
            <person name="Park C.J."/>
            <person name="Oh H.-M."/>
            <person name="Lee J.-S."/>
            <person name="Jin S.-J."/>
            <person name="Um H.-W."/>
            <person name="Lee H.-J."/>
            <person name="Oh S.-J."/>
            <person name="Kim J.Y."/>
            <person name="Kang H.L."/>
            <person name="Lee S.Y."/>
            <person name="Lee K.J."/>
            <person name="Kang H.S."/>
        </authorList>
    </citation>
    <scope>NUCLEOTIDE SEQUENCE [LARGE SCALE GENOMIC DNA]</scope>
    <source>
        <strain>ATCC 31821 / ZM4 / CP4</strain>
    </source>
</reference>
<feature type="chain" id="PRO_0000229098" description="1-(5-phosphoribosyl)-5-[(5-phosphoribosylamino)methylideneamino] imidazole-4-carboxamide isomerase">
    <location>
        <begin position="1"/>
        <end position="250"/>
    </location>
</feature>
<feature type="active site" description="Proton acceptor" evidence="1">
    <location>
        <position position="12"/>
    </location>
</feature>
<feature type="active site" description="Proton donor" evidence="1">
    <location>
        <position position="133"/>
    </location>
</feature>
<organism>
    <name type="scientific">Zymomonas mobilis subsp. mobilis (strain ATCC 31821 / ZM4 / CP4)</name>
    <dbReference type="NCBI Taxonomy" id="264203"/>
    <lineage>
        <taxon>Bacteria</taxon>
        <taxon>Pseudomonadati</taxon>
        <taxon>Pseudomonadota</taxon>
        <taxon>Alphaproteobacteria</taxon>
        <taxon>Sphingomonadales</taxon>
        <taxon>Zymomonadaceae</taxon>
        <taxon>Zymomonas</taxon>
    </lineage>
</organism>
<keyword id="KW-0028">Amino-acid biosynthesis</keyword>
<keyword id="KW-0963">Cytoplasm</keyword>
<keyword id="KW-0368">Histidine biosynthesis</keyword>
<keyword id="KW-0413">Isomerase</keyword>
<keyword id="KW-1185">Reference proteome</keyword>
<protein>
    <recommendedName>
        <fullName evidence="1">1-(5-phosphoribosyl)-5-[(5-phosphoribosylamino)methylideneamino] imidazole-4-carboxamide isomerase</fullName>
        <ecNumber evidence="1">5.3.1.16</ecNumber>
    </recommendedName>
    <alternativeName>
        <fullName evidence="1">Phosphoribosylformimino-5-aminoimidazole carboxamide ribotide isomerase</fullName>
    </alternativeName>
</protein>
<name>HIS4_ZYMMO</name>
<proteinExistence type="inferred from homology"/>
<evidence type="ECO:0000255" key="1">
    <source>
        <dbReference type="HAMAP-Rule" id="MF_01014"/>
    </source>
</evidence>
<accession>Q5NMD5</accession>
<dbReference type="EC" id="5.3.1.16" evidence="1"/>
<dbReference type="EMBL" id="AE008692">
    <property type="protein sequence ID" value="AAV90125.2"/>
    <property type="molecule type" value="Genomic_DNA"/>
</dbReference>
<dbReference type="RefSeq" id="WP_011241274.1">
    <property type="nucleotide sequence ID" value="NZ_CP035711.1"/>
</dbReference>
<dbReference type="SMR" id="Q5NMD5"/>
<dbReference type="STRING" id="264203.ZMO1501"/>
<dbReference type="KEGG" id="zmo:ZMO1501"/>
<dbReference type="eggNOG" id="COG0106">
    <property type="taxonomic scope" value="Bacteria"/>
</dbReference>
<dbReference type="HOGENOM" id="CLU_048577_1_1_5"/>
<dbReference type="UniPathway" id="UPA00031">
    <property type="reaction ID" value="UER00009"/>
</dbReference>
<dbReference type="Proteomes" id="UP000001173">
    <property type="component" value="Chromosome"/>
</dbReference>
<dbReference type="GO" id="GO:0005737">
    <property type="term" value="C:cytoplasm"/>
    <property type="evidence" value="ECO:0007669"/>
    <property type="project" value="UniProtKB-SubCell"/>
</dbReference>
<dbReference type="GO" id="GO:0003949">
    <property type="term" value="F:1-(5-phosphoribosyl)-5-[(5-phosphoribosylamino)methylideneamino]imidazole-4-carboxamide isomerase activity"/>
    <property type="evidence" value="ECO:0007669"/>
    <property type="project" value="UniProtKB-UniRule"/>
</dbReference>
<dbReference type="GO" id="GO:0000105">
    <property type="term" value="P:L-histidine biosynthetic process"/>
    <property type="evidence" value="ECO:0007669"/>
    <property type="project" value="UniProtKB-UniRule"/>
</dbReference>
<dbReference type="GO" id="GO:0000162">
    <property type="term" value="P:L-tryptophan biosynthetic process"/>
    <property type="evidence" value="ECO:0007669"/>
    <property type="project" value="TreeGrafter"/>
</dbReference>
<dbReference type="CDD" id="cd04732">
    <property type="entry name" value="HisA"/>
    <property type="match status" value="1"/>
</dbReference>
<dbReference type="FunFam" id="3.20.20.70:FF:000009">
    <property type="entry name" value="1-(5-phosphoribosyl)-5-[(5-phosphoribosylamino)methylideneamino] imidazole-4-carboxamide isomerase"/>
    <property type="match status" value="1"/>
</dbReference>
<dbReference type="Gene3D" id="3.20.20.70">
    <property type="entry name" value="Aldolase class I"/>
    <property type="match status" value="1"/>
</dbReference>
<dbReference type="HAMAP" id="MF_01014">
    <property type="entry name" value="HisA"/>
    <property type="match status" value="1"/>
</dbReference>
<dbReference type="InterPro" id="IPR013785">
    <property type="entry name" value="Aldolase_TIM"/>
</dbReference>
<dbReference type="InterPro" id="IPR006062">
    <property type="entry name" value="His_biosynth"/>
</dbReference>
<dbReference type="InterPro" id="IPR006063">
    <property type="entry name" value="HisA_bact_arch"/>
</dbReference>
<dbReference type="InterPro" id="IPR044524">
    <property type="entry name" value="Isoase_HisA-like"/>
</dbReference>
<dbReference type="InterPro" id="IPR023016">
    <property type="entry name" value="Isoase_HisA-like_bact"/>
</dbReference>
<dbReference type="InterPro" id="IPR011060">
    <property type="entry name" value="RibuloseP-bd_barrel"/>
</dbReference>
<dbReference type="NCBIfam" id="TIGR00007">
    <property type="entry name" value="1-(5-phosphoribosyl)-5-[(5-phosphoribosylamino)methylideneamino]imidazole-4-carboxamide isomerase"/>
    <property type="match status" value="1"/>
</dbReference>
<dbReference type="PANTHER" id="PTHR43090">
    <property type="entry name" value="1-(5-PHOSPHORIBOSYL)-5-[(5-PHOSPHORIBOSYLAMINO)METHYLIDENEAMINO] IMIDAZOLE-4-CARBOXAMIDE ISOMERASE"/>
    <property type="match status" value="1"/>
</dbReference>
<dbReference type="PANTHER" id="PTHR43090:SF2">
    <property type="entry name" value="1-(5-PHOSPHORIBOSYL)-5-[(5-PHOSPHORIBOSYLAMINO)METHYLIDENEAMINO] IMIDAZOLE-4-CARBOXAMIDE ISOMERASE"/>
    <property type="match status" value="1"/>
</dbReference>
<dbReference type="Pfam" id="PF00977">
    <property type="entry name" value="His_biosynth"/>
    <property type="match status" value="1"/>
</dbReference>
<dbReference type="SUPFAM" id="SSF51366">
    <property type="entry name" value="Ribulose-phoshate binding barrel"/>
    <property type="match status" value="1"/>
</dbReference>
<comment type="catalytic activity">
    <reaction evidence="1">
        <text>1-(5-phospho-beta-D-ribosyl)-5-[(5-phospho-beta-D-ribosylamino)methylideneamino]imidazole-4-carboxamide = 5-[(5-phospho-1-deoxy-D-ribulos-1-ylimino)methylamino]-1-(5-phospho-beta-D-ribosyl)imidazole-4-carboxamide</text>
        <dbReference type="Rhea" id="RHEA:15469"/>
        <dbReference type="ChEBI" id="CHEBI:58435"/>
        <dbReference type="ChEBI" id="CHEBI:58525"/>
        <dbReference type="EC" id="5.3.1.16"/>
    </reaction>
</comment>
<comment type="pathway">
    <text evidence="1">Amino-acid biosynthesis; L-histidine biosynthesis; L-histidine from 5-phospho-alpha-D-ribose 1-diphosphate: step 4/9.</text>
</comment>
<comment type="subcellular location">
    <subcellularLocation>
        <location evidence="1">Cytoplasm</location>
    </subcellularLocation>
</comment>
<comment type="similarity">
    <text evidence="1">Belongs to the HisA/HisF family.</text>
</comment>